<protein>
    <recommendedName>
        <fullName>Chromatin modification-related protein EAF1</fullName>
    </recommendedName>
    <alternativeName>
        <fullName>ESA1-associated factor 1</fullName>
    </alternativeName>
    <alternativeName>
        <fullName>Vacuolar import and degradation protein 21</fullName>
    </alternativeName>
</protein>
<sequence length="686" mass="79535">MNDTWRSRLKEISHITADPFLRDFHKLHTNDKEQIYSILHNPDNVVEQTFKNTIIKSMEESMFRPLIPTQQMKRRQNDHHNQGPPPKVQKSTVDSLKSQHQIDQQNLDWFLSQPLEDLEVMTVPEQYPLTVPAVLPLAELYYLTQTLASIKLLPGSHKVLMTENFESALAEGKIAVLYSRIEELKRQGKWSLRQPQKFYDPFKFIRKSKKKSFHWDYLLQEGKWMADDFRESSKYKKWCCVVIAEAVEQYWKGRKVSHQTFVDVADLKKIDKSIIRNLPVYTGLGGDSREPPIATVSKLVYPAEDNHWYKIALKPHHHHHRHQTTHQGLFGSTRKYNTLKPPKPPTPKNIEYRIPTIWLPEDDKRLIHYVAEFCFNWDLISEHISSSSTAVSLKKYESNIERRTPWQCFERYIQLNDKFQFSDMKGVYAYHAQQWLEQAHRAQSTTKRRISPLGVGPESVQRGNRKLRWASMFDAMRKAMKKREIAAAKVNHRKSTAELQANQNVTEPKPNSDRIPTPAELSRLKFERDKTLHENHINQQATRARMVQAVAKPAPAPAPAPPPPPPPKPVKRPTTPNGTPLTNEQIQHLLQMQKHRRMLQQQQQQQQQQQHQQQQRRIHFPPAQVSKVINDIQQQNPGLSKDQVTKLAAQYLASLSQQGYGVPSSPVPPHQKNQTASPMSGSPNNA</sequence>
<proteinExistence type="inferred from homology"/>
<feature type="chain" id="PRO_0000065815" description="Chromatin modification-related protein EAF1">
    <location>
        <begin position="1"/>
        <end position="686"/>
    </location>
</feature>
<feature type="domain" description="HSA" evidence="3">
    <location>
        <begin position="202"/>
        <end position="280"/>
    </location>
</feature>
<feature type="domain" description="Myb-like" evidence="2">
    <location>
        <begin position="354"/>
        <end position="418"/>
    </location>
</feature>
<feature type="region of interest" description="Disordered" evidence="4">
    <location>
        <begin position="71"/>
        <end position="97"/>
    </location>
</feature>
<feature type="region of interest" description="Disordered" evidence="4">
    <location>
        <begin position="493"/>
        <end position="517"/>
    </location>
</feature>
<feature type="region of interest" description="Disordered" evidence="4">
    <location>
        <begin position="544"/>
        <end position="617"/>
    </location>
</feature>
<feature type="region of interest" description="Disordered" evidence="4">
    <location>
        <begin position="657"/>
        <end position="686"/>
    </location>
</feature>
<feature type="compositionally biased region" description="Polar residues" evidence="4">
    <location>
        <begin position="497"/>
        <end position="506"/>
    </location>
</feature>
<feature type="compositionally biased region" description="Pro residues" evidence="4">
    <location>
        <begin position="554"/>
        <end position="568"/>
    </location>
</feature>
<feature type="compositionally biased region" description="Polar residues" evidence="4">
    <location>
        <begin position="574"/>
        <end position="588"/>
    </location>
</feature>
<feature type="compositionally biased region" description="Low complexity" evidence="4">
    <location>
        <begin position="599"/>
        <end position="613"/>
    </location>
</feature>
<feature type="compositionally biased region" description="Polar residues" evidence="4">
    <location>
        <begin position="671"/>
        <end position="686"/>
    </location>
</feature>
<dbReference type="EMBL" id="CP017626">
    <property type="protein sequence ID" value="AOW29444.1"/>
    <property type="molecule type" value="Genomic_DNA"/>
</dbReference>
<dbReference type="RefSeq" id="XP_715387.2">
    <property type="nucleotide sequence ID" value="XM_710294.2"/>
</dbReference>
<dbReference type="SMR" id="Q5A119"/>
<dbReference type="FunCoup" id="Q5A119">
    <property type="interactions" value="256"/>
</dbReference>
<dbReference type="STRING" id="237561.Q5A119"/>
<dbReference type="EnsemblFungi" id="C4_07230C_A-T">
    <property type="protein sequence ID" value="C4_07230C_A-T-p1"/>
    <property type="gene ID" value="C4_07230C_A"/>
</dbReference>
<dbReference type="GeneID" id="3642946"/>
<dbReference type="KEGG" id="cal:CAALFM_C407230CA"/>
<dbReference type="CGD" id="CAL0000190942">
    <property type="gene designation" value="VID21"/>
</dbReference>
<dbReference type="VEuPathDB" id="FungiDB:C4_07230C_A"/>
<dbReference type="eggNOG" id="ENOG502RGMX">
    <property type="taxonomic scope" value="Eukaryota"/>
</dbReference>
<dbReference type="HOGENOM" id="CLU_006174_1_0_1"/>
<dbReference type="InParanoid" id="Q5A119"/>
<dbReference type="OrthoDB" id="5364245at2759"/>
<dbReference type="PRO" id="PR:Q5A119"/>
<dbReference type="Proteomes" id="UP000000559">
    <property type="component" value="Chromosome 4"/>
</dbReference>
<dbReference type="GO" id="GO:0035267">
    <property type="term" value="C:NuA4 histone acetyltransferase complex"/>
    <property type="evidence" value="ECO:0000314"/>
    <property type="project" value="CGD"/>
</dbReference>
<dbReference type="GO" id="GO:0005634">
    <property type="term" value="C:nucleus"/>
    <property type="evidence" value="ECO:0007669"/>
    <property type="project" value="UniProtKB-SubCell"/>
</dbReference>
<dbReference type="GO" id="GO:0003682">
    <property type="term" value="F:chromatin binding"/>
    <property type="evidence" value="ECO:0000318"/>
    <property type="project" value="GO_Central"/>
</dbReference>
<dbReference type="GO" id="GO:0006338">
    <property type="term" value="P:chromatin remodeling"/>
    <property type="evidence" value="ECO:0007669"/>
    <property type="project" value="GOC"/>
</dbReference>
<dbReference type="GO" id="GO:0006281">
    <property type="term" value="P:DNA repair"/>
    <property type="evidence" value="ECO:0000318"/>
    <property type="project" value="GO_Central"/>
</dbReference>
<dbReference type="CDD" id="cd00167">
    <property type="entry name" value="SANT"/>
    <property type="match status" value="1"/>
</dbReference>
<dbReference type="FunFam" id="1.10.10.60:FF:000484">
    <property type="entry name" value="Chromatin modification-related protein EAF1"/>
    <property type="match status" value="1"/>
</dbReference>
<dbReference type="Gene3D" id="1.10.10.60">
    <property type="entry name" value="Homeodomain-like"/>
    <property type="match status" value="1"/>
</dbReference>
<dbReference type="InterPro" id="IPR009057">
    <property type="entry name" value="Homeodomain-like_sf"/>
</dbReference>
<dbReference type="InterPro" id="IPR014012">
    <property type="entry name" value="HSA_dom"/>
</dbReference>
<dbReference type="InterPro" id="IPR001005">
    <property type="entry name" value="SANT/Myb"/>
</dbReference>
<dbReference type="PANTHER" id="PTHR46459:SF1">
    <property type="entry name" value="E1A-BINDING PROTEIN P400"/>
    <property type="match status" value="1"/>
</dbReference>
<dbReference type="PANTHER" id="PTHR46459">
    <property type="entry name" value="E1A-BINDING PROTEIN P400-RELATED"/>
    <property type="match status" value="1"/>
</dbReference>
<dbReference type="Pfam" id="PF07529">
    <property type="entry name" value="HSA"/>
    <property type="match status" value="1"/>
</dbReference>
<dbReference type="Pfam" id="PF13921">
    <property type="entry name" value="Myb_DNA-bind_6"/>
    <property type="match status" value="1"/>
</dbReference>
<dbReference type="SMART" id="SM00573">
    <property type="entry name" value="HSA"/>
    <property type="match status" value="1"/>
</dbReference>
<dbReference type="SMART" id="SM00717">
    <property type="entry name" value="SANT"/>
    <property type="match status" value="1"/>
</dbReference>
<dbReference type="SUPFAM" id="SSF46689">
    <property type="entry name" value="Homeodomain-like"/>
    <property type="match status" value="1"/>
</dbReference>
<dbReference type="PROSITE" id="PS51204">
    <property type="entry name" value="HSA"/>
    <property type="match status" value="1"/>
</dbReference>
<dbReference type="PROSITE" id="PS50090">
    <property type="entry name" value="MYB_LIKE"/>
    <property type="match status" value="1"/>
</dbReference>
<accession>Q5A119</accession>
<accession>A0A1D8PMS9</accession>
<accession>Q5A189</accession>
<accession>Q5A190</accession>
<name>EAF1_CANAL</name>
<gene>
    <name type="primary">VID21</name>
    <name type="synonym">EAF1</name>
    <name type="ordered locus">CAALFM_C407230CA</name>
    <name type="ORF">CaO19.10589/10590</name>
    <name type="ORF">CaO19.3077</name>
</gene>
<evidence type="ECO:0000250" key="1"/>
<evidence type="ECO:0000255" key="2">
    <source>
        <dbReference type="PROSITE-ProRule" id="PRU00133"/>
    </source>
</evidence>
<evidence type="ECO:0000255" key="3">
    <source>
        <dbReference type="PROSITE-ProRule" id="PRU00549"/>
    </source>
</evidence>
<evidence type="ECO:0000256" key="4">
    <source>
        <dbReference type="SAM" id="MobiDB-lite"/>
    </source>
</evidence>
<evidence type="ECO:0000305" key="5"/>
<reference key="1">
    <citation type="journal article" date="2004" name="Proc. Natl. Acad. Sci. U.S.A.">
        <title>The diploid genome sequence of Candida albicans.</title>
        <authorList>
            <person name="Jones T."/>
            <person name="Federspiel N.A."/>
            <person name="Chibana H."/>
            <person name="Dungan J."/>
            <person name="Kalman S."/>
            <person name="Magee B.B."/>
            <person name="Newport G."/>
            <person name="Thorstenson Y.R."/>
            <person name="Agabian N."/>
            <person name="Magee P.T."/>
            <person name="Davis R.W."/>
            <person name="Scherer S."/>
        </authorList>
    </citation>
    <scope>NUCLEOTIDE SEQUENCE [LARGE SCALE GENOMIC DNA]</scope>
    <source>
        <strain>SC5314 / ATCC MYA-2876</strain>
    </source>
</reference>
<reference key="2">
    <citation type="journal article" date="2007" name="Genome Biol.">
        <title>Assembly of the Candida albicans genome into sixteen supercontigs aligned on the eight chromosomes.</title>
        <authorList>
            <person name="van het Hoog M."/>
            <person name="Rast T.J."/>
            <person name="Martchenko M."/>
            <person name="Grindle S."/>
            <person name="Dignard D."/>
            <person name="Hogues H."/>
            <person name="Cuomo C."/>
            <person name="Berriman M."/>
            <person name="Scherer S."/>
            <person name="Magee B.B."/>
            <person name="Whiteway M."/>
            <person name="Chibana H."/>
            <person name="Nantel A."/>
            <person name="Magee P.T."/>
        </authorList>
    </citation>
    <scope>GENOME REANNOTATION</scope>
    <source>
        <strain>SC5314 / ATCC MYA-2876</strain>
    </source>
</reference>
<reference key="3">
    <citation type="journal article" date="2013" name="Genome Biol.">
        <title>Assembly of a phased diploid Candida albicans genome facilitates allele-specific measurements and provides a simple model for repeat and indel structure.</title>
        <authorList>
            <person name="Muzzey D."/>
            <person name="Schwartz K."/>
            <person name="Weissman J.S."/>
            <person name="Sherlock G."/>
        </authorList>
    </citation>
    <scope>NUCLEOTIDE SEQUENCE [LARGE SCALE GENOMIC DNA]</scope>
    <scope>GENOME REANNOTATION</scope>
    <source>
        <strain>SC5314 / ATCC MYA-2876</strain>
    </source>
</reference>
<keyword id="KW-0010">Activator</keyword>
<keyword id="KW-0156">Chromatin regulator</keyword>
<keyword id="KW-0227">DNA damage</keyword>
<keyword id="KW-0234">DNA repair</keyword>
<keyword id="KW-0539">Nucleus</keyword>
<keyword id="KW-1185">Reference proteome</keyword>
<keyword id="KW-0804">Transcription</keyword>
<keyword id="KW-0805">Transcription regulation</keyword>
<comment type="function">
    <text evidence="1">Component of the NuA4 histone acetyltransferase complex which is involved in transcriptional activation of selected genes principally by acetylation of nucleosomal histone H4 and H2A. The NuA4 complex is also involved in DNA repair (By similarity).</text>
</comment>
<comment type="subunit">
    <text evidence="1">Component of the NuA4 histone acetyltransferase complex.</text>
</comment>
<comment type="subcellular location">
    <subcellularLocation>
        <location evidence="5">Nucleus</location>
    </subcellularLocation>
</comment>
<comment type="similarity">
    <text evidence="5">Belongs to the EAF1 family.</text>
</comment>
<organism>
    <name type="scientific">Candida albicans (strain SC5314 / ATCC MYA-2876)</name>
    <name type="common">Yeast</name>
    <dbReference type="NCBI Taxonomy" id="237561"/>
    <lineage>
        <taxon>Eukaryota</taxon>
        <taxon>Fungi</taxon>
        <taxon>Dikarya</taxon>
        <taxon>Ascomycota</taxon>
        <taxon>Saccharomycotina</taxon>
        <taxon>Pichiomycetes</taxon>
        <taxon>Debaryomycetaceae</taxon>
        <taxon>Candida/Lodderomyces clade</taxon>
        <taxon>Candida</taxon>
    </lineage>
</organism>